<comment type="function">
    <text evidence="5">Catalyzes the irreversible hydrolysis of pyrophosphate (PPi) to phosphate. The MgPPi(2-) complex binds to the enzyme only after a free Mg(2+) ion has bound. No activity with glycerol-3-phosphate, glucose-6-phosphate, p-nitrophenylphosphate, ADP, NADP(+), NAD(+),NADH, NADPH or phosphoribosyl pyrophosphate as substrates.</text>
</comment>
<comment type="catalytic activity">
    <reaction evidence="5">
        <text>diphosphate + H2O = 2 phosphate + H(+)</text>
        <dbReference type="Rhea" id="RHEA:24576"/>
        <dbReference type="ChEBI" id="CHEBI:15377"/>
        <dbReference type="ChEBI" id="CHEBI:15378"/>
        <dbReference type="ChEBI" id="CHEBI:33019"/>
        <dbReference type="ChEBI" id="CHEBI:43474"/>
        <dbReference type="EC" id="3.6.1.1"/>
    </reaction>
</comment>
<comment type="cofactor">
    <cofactor evidence="5">
        <name>Mg(2+)</name>
        <dbReference type="ChEBI" id="CHEBI:18420"/>
    </cofactor>
</comment>
<comment type="activity regulation">
    <text evidence="5">Inhibited by Zn(2+), Ca(2+), Ba(2+), Fe(2+), Co(2+), Cu(2+), Eu(2+), Eu(3+) and Mn(2+).</text>
</comment>
<comment type="biophysicochemical properties">
    <kinetics>
        <text evidence="5">kcat is 9.20 sec(-1) for pyrophosphate.</text>
    </kinetics>
</comment>
<comment type="subunit">
    <text evidence="5">Monomer.</text>
</comment>
<comment type="subcellular location">
    <subcellularLocation>
        <location evidence="4">Cytoplasm</location>
    </subcellularLocation>
</comment>
<comment type="tissue specificity">
    <text evidence="7">Ubiquitous, excepted in pollen. Very low expression in cork, xylem and hypocotyls.</text>
</comment>
<comment type="developmental stage">
    <text evidence="7">Expressed throughout plant development, with a lower expression in young plantes and a maximum during flowering.</text>
</comment>
<comment type="similarity">
    <text evidence="8">Belongs to the PPase family.</text>
</comment>
<feature type="chain" id="PRO_0000431797" description="Soluble inorganic pyrophosphatase 4">
    <location>
        <begin position="1"/>
        <end position="216"/>
    </location>
</feature>
<feature type="active site" description="Proton donor" evidence="1">
    <location>
        <position position="88"/>
    </location>
</feature>
<feature type="binding site" evidence="3">
    <location>
        <position position="66"/>
    </location>
    <ligand>
        <name>substrate</name>
    </ligand>
</feature>
<feature type="binding site" evidence="3">
    <location>
        <position position="80"/>
    </location>
    <ligand>
        <name>substrate</name>
    </ligand>
</feature>
<feature type="binding site" evidence="3">
    <location>
        <position position="92"/>
    </location>
    <ligand>
        <name>substrate</name>
    </ligand>
</feature>
<feature type="binding site" evidence="2">
    <location>
        <position position="102"/>
    </location>
    <ligand>
        <name>Mg(2+)</name>
        <dbReference type="ChEBI" id="CHEBI:18420"/>
        <label>1</label>
    </ligand>
</feature>
<feature type="binding site" evidence="2">
    <location>
        <position position="107"/>
    </location>
    <ligand>
        <name>Mg(2+)</name>
        <dbReference type="ChEBI" id="CHEBI:18420"/>
        <label>1</label>
    </ligand>
</feature>
<feature type="binding site" evidence="2">
    <location>
        <position position="107"/>
    </location>
    <ligand>
        <name>Mg(2+)</name>
        <dbReference type="ChEBI" id="CHEBI:18420"/>
        <label>2</label>
    </ligand>
</feature>
<feature type="binding site" evidence="2">
    <location>
        <position position="139"/>
    </location>
    <ligand>
        <name>Mg(2+)</name>
        <dbReference type="ChEBI" id="CHEBI:18420"/>
        <label>1</label>
    </ligand>
</feature>
<feature type="binding site" evidence="3">
    <location>
        <position position="176"/>
    </location>
    <ligand>
        <name>substrate</name>
    </ligand>
</feature>
<feature type="modified residue" description="Phosphoserine" evidence="12">
    <location>
        <position position="18"/>
    </location>
</feature>
<feature type="sequence conflict" description="In Ref. 4; AAM65537." evidence="8" ref="4">
    <original>G</original>
    <variation>A</variation>
    <location>
        <position position="119"/>
    </location>
</feature>
<gene>
    <name evidence="6" type="primary">PPA4</name>
    <name evidence="9" type="ordered locus">At3g53620</name>
    <name evidence="10" type="ORF">F4P12.320</name>
</gene>
<reference key="1">
    <citation type="journal article" date="2000" name="Nature">
        <title>Sequence and analysis of chromosome 3 of the plant Arabidopsis thaliana.</title>
        <authorList>
            <person name="Salanoubat M."/>
            <person name="Lemcke K."/>
            <person name="Rieger M."/>
            <person name="Ansorge W."/>
            <person name="Unseld M."/>
            <person name="Fartmann B."/>
            <person name="Valle G."/>
            <person name="Bloecker H."/>
            <person name="Perez-Alonso M."/>
            <person name="Obermaier B."/>
            <person name="Delseny M."/>
            <person name="Boutry M."/>
            <person name="Grivell L.A."/>
            <person name="Mache R."/>
            <person name="Puigdomenech P."/>
            <person name="De Simone V."/>
            <person name="Choisne N."/>
            <person name="Artiguenave F."/>
            <person name="Robert C."/>
            <person name="Brottier P."/>
            <person name="Wincker P."/>
            <person name="Cattolico L."/>
            <person name="Weissenbach J."/>
            <person name="Saurin W."/>
            <person name="Quetier F."/>
            <person name="Schaefer M."/>
            <person name="Mueller-Auer S."/>
            <person name="Gabel C."/>
            <person name="Fuchs M."/>
            <person name="Benes V."/>
            <person name="Wurmbach E."/>
            <person name="Drzonek H."/>
            <person name="Erfle H."/>
            <person name="Jordan N."/>
            <person name="Bangert S."/>
            <person name="Wiedelmann R."/>
            <person name="Kranz H."/>
            <person name="Voss H."/>
            <person name="Holland R."/>
            <person name="Brandt P."/>
            <person name="Nyakatura G."/>
            <person name="Vezzi A."/>
            <person name="D'Angelo M."/>
            <person name="Pallavicini A."/>
            <person name="Toppo S."/>
            <person name="Simionati B."/>
            <person name="Conrad A."/>
            <person name="Hornischer K."/>
            <person name="Kauer G."/>
            <person name="Loehnert T.-H."/>
            <person name="Nordsiek G."/>
            <person name="Reichelt J."/>
            <person name="Scharfe M."/>
            <person name="Schoen O."/>
            <person name="Bargues M."/>
            <person name="Terol J."/>
            <person name="Climent J."/>
            <person name="Navarro P."/>
            <person name="Collado C."/>
            <person name="Perez-Perez A."/>
            <person name="Ottenwaelder B."/>
            <person name="Duchemin D."/>
            <person name="Cooke R."/>
            <person name="Laudie M."/>
            <person name="Berger-Llauro C."/>
            <person name="Purnelle B."/>
            <person name="Masuy D."/>
            <person name="de Haan M."/>
            <person name="Maarse A.C."/>
            <person name="Alcaraz J.-P."/>
            <person name="Cottet A."/>
            <person name="Casacuberta E."/>
            <person name="Monfort A."/>
            <person name="Argiriou A."/>
            <person name="Flores M."/>
            <person name="Liguori R."/>
            <person name="Vitale D."/>
            <person name="Mannhaupt G."/>
            <person name="Haase D."/>
            <person name="Schoof H."/>
            <person name="Rudd S."/>
            <person name="Zaccaria P."/>
            <person name="Mewes H.-W."/>
            <person name="Mayer K.F.X."/>
            <person name="Kaul S."/>
            <person name="Town C.D."/>
            <person name="Koo H.L."/>
            <person name="Tallon L.J."/>
            <person name="Jenkins J."/>
            <person name="Rooney T."/>
            <person name="Rizzo M."/>
            <person name="Walts A."/>
            <person name="Utterback T."/>
            <person name="Fujii C.Y."/>
            <person name="Shea T.P."/>
            <person name="Creasy T.H."/>
            <person name="Haas B."/>
            <person name="Maiti R."/>
            <person name="Wu D."/>
            <person name="Peterson J."/>
            <person name="Van Aken S."/>
            <person name="Pai G."/>
            <person name="Militscher J."/>
            <person name="Sellers P."/>
            <person name="Gill J.E."/>
            <person name="Feldblyum T.V."/>
            <person name="Preuss D."/>
            <person name="Lin X."/>
            <person name="Nierman W.C."/>
            <person name="Salzberg S.L."/>
            <person name="White O."/>
            <person name="Venter J.C."/>
            <person name="Fraser C.M."/>
            <person name="Kaneko T."/>
            <person name="Nakamura Y."/>
            <person name="Sato S."/>
            <person name="Kato T."/>
            <person name="Asamizu E."/>
            <person name="Sasamoto S."/>
            <person name="Kimura T."/>
            <person name="Idesawa K."/>
            <person name="Kawashima K."/>
            <person name="Kishida Y."/>
            <person name="Kiyokawa C."/>
            <person name="Kohara M."/>
            <person name="Matsumoto M."/>
            <person name="Matsuno A."/>
            <person name="Muraki A."/>
            <person name="Nakayama S."/>
            <person name="Nakazaki N."/>
            <person name="Shinpo S."/>
            <person name="Takeuchi C."/>
            <person name="Wada T."/>
            <person name="Watanabe A."/>
            <person name="Yamada M."/>
            <person name="Yasuda M."/>
            <person name="Tabata S."/>
        </authorList>
    </citation>
    <scope>NUCLEOTIDE SEQUENCE [LARGE SCALE GENOMIC DNA]</scope>
    <source>
        <strain>cv. Columbia</strain>
    </source>
</reference>
<reference key="2">
    <citation type="journal article" date="2017" name="Plant J.">
        <title>Araport11: a complete reannotation of the Arabidopsis thaliana reference genome.</title>
        <authorList>
            <person name="Cheng C.Y."/>
            <person name="Krishnakumar V."/>
            <person name="Chan A.P."/>
            <person name="Thibaud-Nissen F."/>
            <person name="Schobel S."/>
            <person name="Town C.D."/>
        </authorList>
    </citation>
    <scope>GENOME REANNOTATION</scope>
    <source>
        <strain>cv. Columbia</strain>
    </source>
</reference>
<reference key="3">
    <citation type="submission" date="2006-07" db="EMBL/GenBank/DDBJ databases">
        <title>Large-scale analysis of RIKEN Arabidopsis full-length (RAFL) cDNAs.</title>
        <authorList>
            <person name="Totoki Y."/>
            <person name="Seki M."/>
            <person name="Ishida J."/>
            <person name="Nakajima M."/>
            <person name="Enju A."/>
            <person name="Kamiya A."/>
            <person name="Narusaka M."/>
            <person name="Shin-i T."/>
            <person name="Nakagawa M."/>
            <person name="Sakamoto N."/>
            <person name="Oishi K."/>
            <person name="Kohara Y."/>
            <person name="Kobayashi M."/>
            <person name="Toyoda A."/>
            <person name="Sakaki Y."/>
            <person name="Sakurai T."/>
            <person name="Iida K."/>
            <person name="Akiyama K."/>
            <person name="Satou M."/>
            <person name="Toyoda T."/>
            <person name="Konagaya A."/>
            <person name="Carninci P."/>
            <person name="Kawai J."/>
            <person name="Hayashizaki Y."/>
            <person name="Shinozaki K."/>
        </authorList>
    </citation>
    <scope>NUCLEOTIDE SEQUENCE [LARGE SCALE MRNA]</scope>
    <source>
        <strain>cv. Columbia</strain>
    </source>
</reference>
<reference key="4">
    <citation type="submission" date="2002-03" db="EMBL/GenBank/DDBJ databases">
        <title>Full-length cDNA from Arabidopsis thaliana.</title>
        <authorList>
            <person name="Brover V.V."/>
            <person name="Troukhan M.E."/>
            <person name="Alexandrov N.A."/>
            <person name="Lu Y.-P."/>
            <person name="Flavell R.B."/>
            <person name="Feldmann K.A."/>
        </authorList>
    </citation>
    <scope>NUCLEOTIDE SEQUENCE [LARGE SCALE MRNA]</scope>
</reference>
<reference key="5">
    <citation type="journal article" date="2004" name="FEBS Lett.">
        <title>Identification of an Arabidopsis inorganic pyrophosphatase capable of being imported into chloroplasts.</title>
        <authorList>
            <person name="Schulze S."/>
            <person name="Mant A."/>
            <person name="Kossmann J."/>
            <person name="Lloyd J.R."/>
        </authorList>
    </citation>
    <scope>GENE FAMILY</scope>
    <scope>NOMENCLATURE</scope>
</reference>
<reference key="6">
    <citation type="journal article" date="2007" name="Plant Sci.">
        <title>Characterization of two soluble inorganic pyrophosphatases from Arabidopsis thaliana.</title>
        <authorList>
            <person name="Navarro-De la Sancha E."/>
            <person name="Coello-Coutino M.P."/>
            <person name="Valencia-Turcotte L.G."/>
            <person name="Hernandez-Dominguez E.E."/>
            <person name="Trejo-Yepes G."/>
            <person name="Rodriguez-Sotres R."/>
        </authorList>
    </citation>
    <scope>FUNCTION</scope>
    <scope>CATALYTIC ACTIVITY</scope>
    <scope>SUBUNIT</scope>
    <scope>BIOPHYSICOCHEMICAL PROPERTIES</scope>
    <scope>COFACTOR</scope>
    <scope>ACTIVITY REGULATION</scope>
    <scope>TISSUE SPECIFICITY</scope>
    <scope>DEVELOPMENTAL STAGE</scope>
    <source>
        <strain>cv. Columbia</strain>
    </source>
</reference>
<reference key="7">
    <citation type="journal article" date="2009" name="J. Proteomics">
        <title>Phosphoproteomic analysis of nuclei-enriched fractions from Arabidopsis thaliana.</title>
        <authorList>
            <person name="Jones A.M.E."/>
            <person name="MacLean D."/>
            <person name="Studholme D.J."/>
            <person name="Serna-Sanz A."/>
            <person name="Andreasson E."/>
            <person name="Rathjen J.P."/>
            <person name="Peck S.C."/>
        </authorList>
    </citation>
    <scope>PHOSPHORYLATION [LARGE SCALE ANALYSIS] AT SER-18</scope>
    <scope>IDENTIFICATION BY MASS SPECTROMETRY [LARGE SCALE ANALYSIS]</scope>
    <source>
        <strain>cv. Columbia</strain>
    </source>
</reference>
<proteinExistence type="evidence at protein level"/>
<accession>Q9LFF9</accession>
<accession>Q8LA73</accession>
<dbReference type="EC" id="3.6.1.1" evidence="5"/>
<dbReference type="EMBL" id="AL132966">
    <property type="protein sequence ID" value="CAB67669.1"/>
    <property type="molecule type" value="Genomic_DNA"/>
</dbReference>
<dbReference type="EMBL" id="CP002686">
    <property type="protein sequence ID" value="AEE79120.1"/>
    <property type="molecule type" value="Genomic_DNA"/>
</dbReference>
<dbReference type="EMBL" id="AK226578">
    <property type="protein sequence ID" value="BAE98700.1"/>
    <property type="molecule type" value="mRNA"/>
</dbReference>
<dbReference type="EMBL" id="AY087991">
    <property type="protein sequence ID" value="AAM65537.1"/>
    <property type="molecule type" value="mRNA"/>
</dbReference>
<dbReference type="PIR" id="T45902">
    <property type="entry name" value="T45902"/>
</dbReference>
<dbReference type="RefSeq" id="NP_190930.1">
    <property type="nucleotide sequence ID" value="NM_115222.3"/>
</dbReference>
<dbReference type="SMR" id="Q9LFF9"/>
<dbReference type="FunCoup" id="Q9LFF9">
    <property type="interactions" value="59"/>
</dbReference>
<dbReference type="STRING" id="3702.Q9LFF9"/>
<dbReference type="iPTMnet" id="Q9LFF9"/>
<dbReference type="PaxDb" id="3702-AT3G53620.1"/>
<dbReference type="ProteomicsDB" id="247044"/>
<dbReference type="EnsemblPlants" id="AT3G53620.1">
    <property type="protein sequence ID" value="AT3G53620.1"/>
    <property type="gene ID" value="AT3G53620"/>
</dbReference>
<dbReference type="GeneID" id="824530"/>
<dbReference type="Gramene" id="AT3G53620.1">
    <property type="protein sequence ID" value="AT3G53620.1"/>
    <property type="gene ID" value="AT3G53620"/>
</dbReference>
<dbReference type="KEGG" id="ath:AT3G53620"/>
<dbReference type="Araport" id="AT3G53620"/>
<dbReference type="TAIR" id="AT3G53620">
    <property type="gene designation" value="PPA4"/>
</dbReference>
<dbReference type="eggNOG" id="KOG1626">
    <property type="taxonomic scope" value="Eukaryota"/>
</dbReference>
<dbReference type="HOGENOM" id="CLU_073198_2_1_1"/>
<dbReference type="InParanoid" id="Q9LFF9"/>
<dbReference type="OMA" id="YANYVVE"/>
<dbReference type="OrthoDB" id="1608002at2759"/>
<dbReference type="PhylomeDB" id="Q9LFF9"/>
<dbReference type="PRO" id="PR:Q9LFF9"/>
<dbReference type="Proteomes" id="UP000006548">
    <property type="component" value="Chromosome 3"/>
</dbReference>
<dbReference type="ExpressionAtlas" id="Q9LFF9">
    <property type="expression patterns" value="baseline and differential"/>
</dbReference>
<dbReference type="GO" id="GO:0005829">
    <property type="term" value="C:cytosol"/>
    <property type="evidence" value="ECO:0000314"/>
    <property type="project" value="TAIR"/>
</dbReference>
<dbReference type="GO" id="GO:0005654">
    <property type="term" value="C:nucleoplasm"/>
    <property type="evidence" value="ECO:0000314"/>
    <property type="project" value="TAIR"/>
</dbReference>
<dbReference type="GO" id="GO:0004427">
    <property type="term" value="F:inorganic diphosphate phosphatase activity"/>
    <property type="evidence" value="ECO:0000316"/>
    <property type="project" value="TAIR"/>
</dbReference>
<dbReference type="GO" id="GO:0000287">
    <property type="term" value="F:magnesium ion binding"/>
    <property type="evidence" value="ECO:0007669"/>
    <property type="project" value="InterPro"/>
</dbReference>
<dbReference type="GO" id="GO:0006796">
    <property type="term" value="P:phosphate-containing compound metabolic process"/>
    <property type="evidence" value="ECO:0007669"/>
    <property type="project" value="InterPro"/>
</dbReference>
<dbReference type="CDD" id="cd00412">
    <property type="entry name" value="pyrophosphatase"/>
    <property type="match status" value="1"/>
</dbReference>
<dbReference type="FunFam" id="3.90.80.10:FF:000002">
    <property type="entry name" value="Soluble inorganic pyrophosphatase 4"/>
    <property type="match status" value="1"/>
</dbReference>
<dbReference type="Gene3D" id="3.90.80.10">
    <property type="entry name" value="Inorganic pyrophosphatase"/>
    <property type="match status" value="1"/>
</dbReference>
<dbReference type="HAMAP" id="MF_00209">
    <property type="entry name" value="Inorganic_PPase"/>
    <property type="match status" value="1"/>
</dbReference>
<dbReference type="InterPro" id="IPR008162">
    <property type="entry name" value="Pyrophosphatase"/>
</dbReference>
<dbReference type="InterPro" id="IPR036649">
    <property type="entry name" value="Pyrophosphatase_sf"/>
</dbReference>
<dbReference type="PANTHER" id="PTHR10286">
    <property type="entry name" value="INORGANIC PYROPHOSPHATASE"/>
    <property type="match status" value="1"/>
</dbReference>
<dbReference type="Pfam" id="PF00719">
    <property type="entry name" value="Pyrophosphatase"/>
    <property type="match status" value="1"/>
</dbReference>
<dbReference type="SUPFAM" id="SSF50324">
    <property type="entry name" value="Inorganic pyrophosphatase"/>
    <property type="match status" value="1"/>
</dbReference>
<dbReference type="PROSITE" id="PS00387">
    <property type="entry name" value="PPASE"/>
    <property type="match status" value="1"/>
</dbReference>
<protein>
    <recommendedName>
        <fullName evidence="6">Soluble inorganic pyrophosphatase 4</fullName>
        <ecNumber evidence="5">3.6.1.1</ecNumber>
    </recommendedName>
    <alternativeName>
        <fullName evidence="6">Pyrophosphate phospho-hydrolase 4</fullName>
        <shortName evidence="6">PPase 4</shortName>
    </alternativeName>
</protein>
<evidence type="ECO:0000250" key="1">
    <source>
        <dbReference type="UniProtKB" id="P00817"/>
    </source>
</evidence>
<evidence type="ECO:0000250" key="2">
    <source>
        <dbReference type="UniProtKB" id="P0A7A9"/>
    </source>
</evidence>
<evidence type="ECO:0000250" key="3">
    <source>
        <dbReference type="UniProtKB" id="P9WI55"/>
    </source>
</evidence>
<evidence type="ECO:0000250" key="4">
    <source>
        <dbReference type="UniProtKB" id="Q93V56"/>
    </source>
</evidence>
<evidence type="ECO:0000269" key="5">
    <source ref="6"/>
</evidence>
<evidence type="ECO:0000303" key="6">
    <source>
    </source>
</evidence>
<evidence type="ECO:0000303" key="7">
    <source ref="6"/>
</evidence>
<evidence type="ECO:0000305" key="8"/>
<evidence type="ECO:0000312" key="9">
    <source>
        <dbReference type="Araport" id="AT3G53620"/>
    </source>
</evidence>
<evidence type="ECO:0000312" key="10">
    <source>
        <dbReference type="EMBL" id="CAB67669.1"/>
    </source>
</evidence>
<evidence type="ECO:0000312" key="11">
    <source>
        <dbReference type="Proteomes" id="UP000006548"/>
    </source>
</evidence>
<evidence type="ECO:0007744" key="12">
    <source>
    </source>
</evidence>
<sequence>MAPPIEVSTKSYVEKHVSLPTLNERILSSMSHRSVAAHPWHDLEIGPEAPIIFNCVVEIGKGSKVKYELDKTTGLIKVDRILYSSVVYPHNYGFIPRTLCEDSDPIDVLVIMQEPVIPGCFLRAKAIGLMPMIDQGEKDDKIIAVCADDPEYRHYNDISELPPHRMAEIRRFFEDYKKNENKEVAVNDFLPATAAYDAVQHSMDLYADYVVENLRR</sequence>
<keyword id="KW-0963">Cytoplasm</keyword>
<keyword id="KW-0378">Hydrolase</keyword>
<keyword id="KW-0460">Magnesium</keyword>
<keyword id="KW-0479">Metal-binding</keyword>
<keyword id="KW-0597">Phosphoprotein</keyword>
<keyword id="KW-1185">Reference proteome</keyword>
<organism evidence="11">
    <name type="scientific">Arabidopsis thaliana</name>
    <name type="common">Mouse-ear cress</name>
    <dbReference type="NCBI Taxonomy" id="3702"/>
    <lineage>
        <taxon>Eukaryota</taxon>
        <taxon>Viridiplantae</taxon>
        <taxon>Streptophyta</taxon>
        <taxon>Embryophyta</taxon>
        <taxon>Tracheophyta</taxon>
        <taxon>Spermatophyta</taxon>
        <taxon>Magnoliopsida</taxon>
        <taxon>eudicotyledons</taxon>
        <taxon>Gunneridae</taxon>
        <taxon>Pentapetalae</taxon>
        <taxon>rosids</taxon>
        <taxon>malvids</taxon>
        <taxon>Brassicales</taxon>
        <taxon>Brassicaceae</taxon>
        <taxon>Camelineae</taxon>
        <taxon>Arabidopsis</taxon>
    </lineage>
</organism>
<name>IPYR4_ARATH</name>